<gene>
    <name type="primary">rpl21e</name>
    <name type="ordered locus">MJ0040</name>
</gene>
<dbReference type="EMBL" id="L77117">
    <property type="protein sequence ID" value="AAB98021.1"/>
    <property type="molecule type" value="Genomic_DNA"/>
</dbReference>
<dbReference type="RefSeq" id="WP_010869531.1">
    <property type="nucleotide sequence ID" value="NC_000909.1"/>
</dbReference>
<dbReference type="SMR" id="P54013"/>
<dbReference type="FunCoup" id="P54013">
    <property type="interactions" value="129"/>
</dbReference>
<dbReference type="STRING" id="243232.MJ_0040"/>
<dbReference type="PaxDb" id="243232-MJ_0040"/>
<dbReference type="EnsemblBacteria" id="AAB98021">
    <property type="protein sequence ID" value="AAB98021"/>
    <property type="gene ID" value="MJ_0040"/>
</dbReference>
<dbReference type="GeneID" id="1450878"/>
<dbReference type="KEGG" id="mja:MJ_0040"/>
<dbReference type="eggNOG" id="arCOG04129">
    <property type="taxonomic scope" value="Archaea"/>
</dbReference>
<dbReference type="HOGENOM" id="CLU_103610_1_1_2"/>
<dbReference type="InParanoid" id="P54013"/>
<dbReference type="OrthoDB" id="6295at2157"/>
<dbReference type="PhylomeDB" id="P54013"/>
<dbReference type="Proteomes" id="UP000000805">
    <property type="component" value="Chromosome"/>
</dbReference>
<dbReference type="GO" id="GO:0022625">
    <property type="term" value="C:cytosolic large ribosomal subunit"/>
    <property type="evidence" value="ECO:0000318"/>
    <property type="project" value="GO_Central"/>
</dbReference>
<dbReference type="GO" id="GO:0003735">
    <property type="term" value="F:structural constituent of ribosome"/>
    <property type="evidence" value="ECO:0000318"/>
    <property type="project" value="GO_Central"/>
</dbReference>
<dbReference type="GO" id="GO:0006412">
    <property type="term" value="P:translation"/>
    <property type="evidence" value="ECO:0007669"/>
    <property type="project" value="UniProtKB-UniRule"/>
</dbReference>
<dbReference type="FunFam" id="2.30.30.70:FF:000001">
    <property type="entry name" value="60S ribosomal protein L21"/>
    <property type="match status" value="1"/>
</dbReference>
<dbReference type="Gene3D" id="2.30.30.70">
    <property type="entry name" value="Ribosomal protein L21"/>
    <property type="match status" value="1"/>
</dbReference>
<dbReference type="HAMAP" id="MF_00369">
    <property type="entry name" value="Ribosomal_eL21"/>
    <property type="match status" value="1"/>
</dbReference>
<dbReference type="InterPro" id="IPR001147">
    <property type="entry name" value="Ribosomal_eL21"/>
</dbReference>
<dbReference type="InterPro" id="IPR022856">
    <property type="entry name" value="Ribosomal_eL21_arc"/>
</dbReference>
<dbReference type="InterPro" id="IPR018259">
    <property type="entry name" value="Ribosomal_eL21_CS"/>
</dbReference>
<dbReference type="InterPro" id="IPR036948">
    <property type="entry name" value="Ribosomal_eL21_sf"/>
</dbReference>
<dbReference type="InterPro" id="IPR008991">
    <property type="entry name" value="Translation_prot_SH3-like_sf"/>
</dbReference>
<dbReference type="NCBIfam" id="NF003303">
    <property type="entry name" value="PRK04306.1"/>
    <property type="match status" value="1"/>
</dbReference>
<dbReference type="PANTHER" id="PTHR20981">
    <property type="entry name" value="60S RIBOSOMAL PROTEIN L21"/>
    <property type="match status" value="1"/>
</dbReference>
<dbReference type="Pfam" id="PF01157">
    <property type="entry name" value="Ribosomal_L21e"/>
    <property type="match status" value="1"/>
</dbReference>
<dbReference type="SUPFAM" id="SSF50104">
    <property type="entry name" value="Translation proteins SH3-like domain"/>
    <property type="match status" value="1"/>
</dbReference>
<dbReference type="PROSITE" id="PS01171">
    <property type="entry name" value="RIBOSOMAL_L21E"/>
    <property type="match status" value="1"/>
</dbReference>
<keyword id="KW-1185">Reference proteome</keyword>
<keyword id="KW-0687">Ribonucleoprotein</keyword>
<keyword id="KW-0689">Ribosomal protein</keyword>
<accession>P54013</accession>
<feature type="chain" id="PRO_0000149689" description="Large ribosomal subunit protein eL21">
    <location>
        <begin position="1"/>
        <end position="98"/>
    </location>
</feature>
<feature type="region of interest" description="Disordered" evidence="1">
    <location>
        <begin position="1"/>
        <end position="22"/>
    </location>
</feature>
<feature type="compositionally biased region" description="Basic residues" evidence="1">
    <location>
        <begin position="10"/>
        <end position="21"/>
    </location>
</feature>
<proteinExistence type="inferred from homology"/>
<protein>
    <recommendedName>
        <fullName evidence="2">Large ribosomal subunit protein eL21</fullName>
    </recommendedName>
    <alternativeName>
        <fullName>50S ribosomal protein L21e</fullName>
    </alternativeName>
</protein>
<organism>
    <name type="scientific">Methanocaldococcus jannaschii (strain ATCC 43067 / DSM 2661 / JAL-1 / JCM 10045 / NBRC 100440)</name>
    <name type="common">Methanococcus jannaschii</name>
    <dbReference type="NCBI Taxonomy" id="243232"/>
    <lineage>
        <taxon>Archaea</taxon>
        <taxon>Methanobacteriati</taxon>
        <taxon>Methanobacteriota</taxon>
        <taxon>Methanomada group</taxon>
        <taxon>Methanococci</taxon>
        <taxon>Methanococcales</taxon>
        <taxon>Methanocaldococcaceae</taxon>
        <taxon>Methanocaldococcus</taxon>
    </lineage>
</organism>
<comment type="similarity">
    <text evidence="2">Belongs to the eukaryotic ribosomal protein eL21 family.</text>
</comment>
<reference key="1">
    <citation type="journal article" date="1996" name="Science">
        <title>Complete genome sequence of the methanogenic archaeon, Methanococcus jannaschii.</title>
        <authorList>
            <person name="Bult C.J."/>
            <person name="White O."/>
            <person name="Olsen G.J."/>
            <person name="Zhou L."/>
            <person name="Fleischmann R.D."/>
            <person name="Sutton G.G."/>
            <person name="Blake J.A."/>
            <person name="FitzGerald L.M."/>
            <person name="Clayton R.A."/>
            <person name="Gocayne J.D."/>
            <person name="Kerlavage A.R."/>
            <person name="Dougherty B.A."/>
            <person name="Tomb J.-F."/>
            <person name="Adams M.D."/>
            <person name="Reich C.I."/>
            <person name="Overbeek R."/>
            <person name="Kirkness E.F."/>
            <person name="Weinstock K.G."/>
            <person name="Merrick J.M."/>
            <person name="Glodek A."/>
            <person name="Scott J.L."/>
            <person name="Geoghagen N.S.M."/>
            <person name="Weidman J.F."/>
            <person name="Fuhrmann J.L."/>
            <person name="Nguyen D."/>
            <person name="Utterback T.R."/>
            <person name="Kelley J.M."/>
            <person name="Peterson J.D."/>
            <person name="Sadow P.W."/>
            <person name="Hanna M.C."/>
            <person name="Cotton M.D."/>
            <person name="Roberts K.M."/>
            <person name="Hurst M.A."/>
            <person name="Kaine B.P."/>
            <person name="Borodovsky M."/>
            <person name="Klenk H.-P."/>
            <person name="Fraser C.M."/>
            <person name="Smith H.O."/>
            <person name="Woese C.R."/>
            <person name="Venter J.C."/>
        </authorList>
    </citation>
    <scope>NUCLEOTIDE SEQUENCE [LARGE SCALE GENOMIC DNA]</scope>
    <source>
        <strain>ATCC 43067 / DSM 2661 / JAL-1 / JCM 10045 / NBRC 100440</strain>
    </source>
</reference>
<evidence type="ECO:0000256" key="1">
    <source>
        <dbReference type="SAM" id="MobiDB-lite"/>
    </source>
</evidence>
<evidence type="ECO:0000305" key="2"/>
<sequence length="98" mass="11329">MVQMSEGFRRKTRKKLSKHPRERGLYPITRALREFKEGEYVHIVIDPSVHKGMPHPRFHGRTGIVVGKQGRAFIVKVRDGGKYKQIIAYPQHLRPATA</sequence>
<name>RL21_METJA</name>